<comment type="function">
    <text evidence="1">An essential GTPase which binds GTP, GDP and possibly (p)ppGpp with moderate affinity, with high nucleotide exchange rates and a fairly low GTP hydrolysis rate. Plays a role in control of the cell cycle, stress response, ribosome biogenesis and in those bacteria that undergo differentiation, in morphogenesis control.</text>
</comment>
<comment type="cofactor">
    <cofactor evidence="1">
        <name>Mg(2+)</name>
        <dbReference type="ChEBI" id="CHEBI:18420"/>
    </cofactor>
</comment>
<comment type="subunit">
    <text evidence="1">Monomer.</text>
</comment>
<comment type="subcellular location">
    <subcellularLocation>
        <location evidence="1">Cytoplasm</location>
    </subcellularLocation>
</comment>
<comment type="similarity">
    <text evidence="1">Belongs to the TRAFAC class OBG-HflX-like GTPase superfamily. OBG GTPase family.</text>
</comment>
<name>OBG_PHOLL</name>
<protein>
    <recommendedName>
        <fullName evidence="1">GTPase Obg</fullName>
        <ecNumber evidence="1">3.6.5.-</ecNumber>
    </recommendedName>
    <alternativeName>
        <fullName evidence="1">GTP-binding protein Obg</fullName>
    </alternativeName>
</protein>
<dbReference type="EC" id="3.6.5.-" evidence="1"/>
<dbReference type="EMBL" id="BX571874">
    <property type="protein sequence ID" value="CAE16912.1"/>
    <property type="molecule type" value="Genomic_DNA"/>
</dbReference>
<dbReference type="RefSeq" id="WP_011148616.1">
    <property type="nucleotide sequence ID" value="NC_005126.1"/>
</dbReference>
<dbReference type="SMR" id="Q7MYX6"/>
<dbReference type="STRING" id="243265.plu4540"/>
<dbReference type="GeneID" id="48850751"/>
<dbReference type="KEGG" id="plu:plu4540"/>
<dbReference type="eggNOG" id="COG0536">
    <property type="taxonomic scope" value="Bacteria"/>
</dbReference>
<dbReference type="HOGENOM" id="CLU_011747_2_0_6"/>
<dbReference type="OrthoDB" id="9807318at2"/>
<dbReference type="Proteomes" id="UP000002514">
    <property type="component" value="Chromosome"/>
</dbReference>
<dbReference type="GO" id="GO:0005737">
    <property type="term" value="C:cytoplasm"/>
    <property type="evidence" value="ECO:0007669"/>
    <property type="project" value="UniProtKB-SubCell"/>
</dbReference>
<dbReference type="GO" id="GO:0005525">
    <property type="term" value="F:GTP binding"/>
    <property type="evidence" value="ECO:0007669"/>
    <property type="project" value="UniProtKB-UniRule"/>
</dbReference>
<dbReference type="GO" id="GO:0003924">
    <property type="term" value="F:GTPase activity"/>
    <property type="evidence" value="ECO:0007669"/>
    <property type="project" value="UniProtKB-UniRule"/>
</dbReference>
<dbReference type="GO" id="GO:0000287">
    <property type="term" value="F:magnesium ion binding"/>
    <property type="evidence" value="ECO:0007669"/>
    <property type="project" value="InterPro"/>
</dbReference>
<dbReference type="GO" id="GO:0042254">
    <property type="term" value="P:ribosome biogenesis"/>
    <property type="evidence" value="ECO:0007669"/>
    <property type="project" value="UniProtKB-UniRule"/>
</dbReference>
<dbReference type="CDD" id="cd01898">
    <property type="entry name" value="Obg"/>
    <property type="match status" value="1"/>
</dbReference>
<dbReference type="FunFam" id="2.70.210.12:FF:000001">
    <property type="entry name" value="GTPase Obg"/>
    <property type="match status" value="1"/>
</dbReference>
<dbReference type="FunFam" id="3.40.50.300:FF:000185">
    <property type="entry name" value="GTPase Obg"/>
    <property type="match status" value="1"/>
</dbReference>
<dbReference type="Gene3D" id="2.70.210.12">
    <property type="entry name" value="GTP1/OBG domain"/>
    <property type="match status" value="1"/>
</dbReference>
<dbReference type="Gene3D" id="3.40.50.300">
    <property type="entry name" value="P-loop containing nucleotide triphosphate hydrolases"/>
    <property type="match status" value="1"/>
</dbReference>
<dbReference type="HAMAP" id="MF_01454">
    <property type="entry name" value="GTPase_Obg"/>
    <property type="match status" value="1"/>
</dbReference>
<dbReference type="InterPro" id="IPR031167">
    <property type="entry name" value="G_OBG"/>
</dbReference>
<dbReference type="InterPro" id="IPR006073">
    <property type="entry name" value="GTP-bd"/>
</dbReference>
<dbReference type="InterPro" id="IPR014100">
    <property type="entry name" value="GTP-bd_Obg/CgtA"/>
</dbReference>
<dbReference type="InterPro" id="IPR006074">
    <property type="entry name" value="GTP1-OBG_CS"/>
</dbReference>
<dbReference type="InterPro" id="IPR006169">
    <property type="entry name" value="GTP1_OBG_dom"/>
</dbReference>
<dbReference type="InterPro" id="IPR036726">
    <property type="entry name" value="GTP1_OBG_dom_sf"/>
</dbReference>
<dbReference type="InterPro" id="IPR045086">
    <property type="entry name" value="OBG_GTPase"/>
</dbReference>
<dbReference type="InterPro" id="IPR027417">
    <property type="entry name" value="P-loop_NTPase"/>
</dbReference>
<dbReference type="NCBIfam" id="TIGR02729">
    <property type="entry name" value="Obg_CgtA"/>
    <property type="match status" value="1"/>
</dbReference>
<dbReference type="NCBIfam" id="NF008955">
    <property type="entry name" value="PRK12297.1"/>
    <property type="match status" value="1"/>
</dbReference>
<dbReference type="NCBIfam" id="NF008956">
    <property type="entry name" value="PRK12299.1"/>
    <property type="match status" value="1"/>
</dbReference>
<dbReference type="PANTHER" id="PTHR11702">
    <property type="entry name" value="DEVELOPMENTALLY REGULATED GTP-BINDING PROTEIN-RELATED"/>
    <property type="match status" value="1"/>
</dbReference>
<dbReference type="PANTHER" id="PTHR11702:SF31">
    <property type="entry name" value="MITOCHONDRIAL RIBOSOME-ASSOCIATED GTPASE 2"/>
    <property type="match status" value="1"/>
</dbReference>
<dbReference type="Pfam" id="PF01018">
    <property type="entry name" value="GTP1_OBG"/>
    <property type="match status" value="1"/>
</dbReference>
<dbReference type="Pfam" id="PF01926">
    <property type="entry name" value="MMR_HSR1"/>
    <property type="match status" value="1"/>
</dbReference>
<dbReference type="PIRSF" id="PIRSF002401">
    <property type="entry name" value="GTP_bd_Obg/CgtA"/>
    <property type="match status" value="1"/>
</dbReference>
<dbReference type="PRINTS" id="PR00326">
    <property type="entry name" value="GTP1OBG"/>
</dbReference>
<dbReference type="SUPFAM" id="SSF82051">
    <property type="entry name" value="Obg GTP-binding protein N-terminal domain"/>
    <property type="match status" value="1"/>
</dbReference>
<dbReference type="SUPFAM" id="SSF52540">
    <property type="entry name" value="P-loop containing nucleoside triphosphate hydrolases"/>
    <property type="match status" value="1"/>
</dbReference>
<dbReference type="PROSITE" id="PS51710">
    <property type="entry name" value="G_OBG"/>
    <property type="match status" value="1"/>
</dbReference>
<dbReference type="PROSITE" id="PS00905">
    <property type="entry name" value="GTP1_OBG"/>
    <property type="match status" value="1"/>
</dbReference>
<dbReference type="PROSITE" id="PS51883">
    <property type="entry name" value="OBG"/>
    <property type="match status" value="1"/>
</dbReference>
<keyword id="KW-0963">Cytoplasm</keyword>
<keyword id="KW-0342">GTP-binding</keyword>
<keyword id="KW-0378">Hydrolase</keyword>
<keyword id="KW-0460">Magnesium</keyword>
<keyword id="KW-0479">Metal-binding</keyword>
<keyword id="KW-0547">Nucleotide-binding</keyword>
<keyword id="KW-1185">Reference proteome</keyword>
<proteinExistence type="inferred from homology"/>
<sequence length="391" mass="43781">MKFVDEARILVVAGDGGNGCVSFRREKYIPKGGPDGGDGGDGGDVYLLADENLNTLIDYRFEKSFRAERGQNGQSRDCTGRRGQDTTIKVPVGTRVRDAVTGEVLGDMIRHEQRLMVAKGGFHGLGNTRFKSSVNRAPRQRTMGTSGETRELMLELMLLADVGMLGMPNAGKSTFIRAVSAAKPKVADYPFTTLVPSLGVVRMDNEQSFVVADIPGLIKGASDGAGLGIRFLKHLERCRVLLHLIDICPVDGSDPVENARIIVNELQQYSEKLAEKPRRLVFNKVDLLEPEEARQRAQAIADELGWEGDFYMISAINRQGVKALCWDIMEFMKTQPRNMSRTEGETQPEKVEFMWDDYHKKQLEQVSEVDDDWDDDWDEDDDEGIEVIYKR</sequence>
<feature type="chain" id="PRO_0000386122" description="GTPase Obg">
    <location>
        <begin position="1"/>
        <end position="391"/>
    </location>
</feature>
<feature type="domain" description="Obg" evidence="2">
    <location>
        <begin position="1"/>
        <end position="159"/>
    </location>
</feature>
<feature type="domain" description="OBG-type G" evidence="1">
    <location>
        <begin position="160"/>
        <end position="333"/>
    </location>
</feature>
<feature type="binding site" evidence="1">
    <location>
        <begin position="166"/>
        <end position="173"/>
    </location>
    <ligand>
        <name>GTP</name>
        <dbReference type="ChEBI" id="CHEBI:37565"/>
    </ligand>
</feature>
<feature type="binding site" evidence="1">
    <location>
        <position position="173"/>
    </location>
    <ligand>
        <name>Mg(2+)</name>
        <dbReference type="ChEBI" id="CHEBI:18420"/>
    </ligand>
</feature>
<feature type="binding site" evidence="1">
    <location>
        <begin position="191"/>
        <end position="195"/>
    </location>
    <ligand>
        <name>GTP</name>
        <dbReference type="ChEBI" id="CHEBI:37565"/>
    </ligand>
</feature>
<feature type="binding site" evidence="1">
    <location>
        <position position="193"/>
    </location>
    <ligand>
        <name>Mg(2+)</name>
        <dbReference type="ChEBI" id="CHEBI:18420"/>
    </ligand>
</feature>
<feature type="binding site" evidence="1">
    <location>
        <begin position="213"/>
        <end position="216"/>
    </location>
    <ligand>
        <name>GTP</name>
        <dbReference type="ChEBI" id="CHEBI:37565"/>
    </ligand>
</feature>
<feature type="binding site" evidence="1">
    <location>
        <begin position="283"/>
        <end position="286"/>
    </location>
    <ligand>
        <name>GTP</name>
        <dbReference type="ChEBI" id="CHEBI:37565"/>
    </ligand>
</feature>
<feature type="binding site" evidence="1">
    <location>
        <begin position="314"/>
        <end position="316"/>
    </location>
    <ligand>
        <name>GTP</name>
        <dbReference type="ChEBI" id="CHEBI:37565"/>
    </ligand>
</feature>
<gene>
    <name evidence="1" type="primary">obg</name>
    <name type="ordered locus">plu4540</name>
</gene>
<evidence type="ECO:0000255" key="1">
    <source>
        <dbReference type="HAMAP-Rule" id="MF_01454"/>
    </source>
</evidence>
<evidence type="ECO:0000255" key="2">
    <source>
        <dbReference type="PROSITE-ProRule" id="PRU01231"/>
    </source>
</evidence>
<organism>
    <name type="scientific">Photorhabdus laumondii subsp. laumondii (strain DSM 15139 / CIP 105565 / TT01)</name>
    <name type="common">Photorhabdus luminescens subsp. laumondii</name>
    <dbReference type="NCBI Taxonomy" id="243265"/>
    <lineage>
        <taxon>Bacteria</taxon>
        <taxon>Pseudomonadati</taxon>
        <taxon>Pseudomonadota</taxon>
        <taxon>Gammaproteobacteria</taxon>
        <taxon>Enterobacterales</taxon>
        <taxon>Morganellaceae</taxon>
        <taxon>Photorhabdus</taxon>
    </lineage>
</organism>
<reference key="1">
    <citation type="journal article" date="2003" name="Nat. Biotechnol.">
        <title>The genome sequence of the entomopathogenic bacterium Photorhabdus luminescens.</title>
        <authorList>
            <person name="Duchaud E."/>
            <person name="Rusniok C."/>
            <person name="Frangeul L."/>
            <person name="Buchrieser C."/>
            <person name="Givaudan A."/>
            <person name="Taourit S."/>
            <person name="Bocs S."/>
            <person name="Boursaux-Eude C."/>
            <person name="Chandler M."/>
            <person name="Charles J.-F."/>
            <person name="Dassa E."/>
            <person name="Derose R."/>
            <person name="Derzelle S."/>
            <person name="Freyssinet G."/>
            <person name="Gaudriault S."/>
            <person name="Medigue C."/>
            <person name="Lanois A."/>
            <person name="Powell K."/>
            <person name="Siguier P."/>
            <person name="Vincent R."/>
            <person name="Wingate V."/>
            <person name="Zouine M."/>
            <person name="Glaser P."/>
            <person name="Boemare N."/>
            <person name="Danchin A."/>
            <person name="Kunst F."/>
        </authorList>
    </citation>
    <scope>NUCLEOTIDE SEQUENCE [LARGE SCALE GENOMIC DNA]</scope>
    <source>
        <strain>DSM 15139 / CIP 105565 / TT01</strain>
    </source>
</reference>
<accession>Q7MYX6</accession>